<gene>
    <name type="primary">Pmpcb</name>
    <name type="synonym">Mppb</name>
</gene>
<comment type="function">
    <text evidence="4 5 7">Catalytic subunit of the essential mitochondrial processing protease (MPP), which cleaves the mitochondrial sequence off newly imported precursors proteins (Probable) (PubMed:12433926). Preferentially, cleaves after an arginine at position P2 (PubMed:12433926). Required for PINK1 turnover by coupling PINK1 mitochondrial import and cleavage, which results in subsequent PINK1 proteolysis (PubMed:22354088).</text>
</comment>
<comment type="catalytic activity">
    <reaction evidence="4 7">
        <text>Release of N-terminal transit peptides from precursor proteins imported into the mitochondrion, typically with Arg in position P2.</text>
        <dbReference type="EC" id="3.4.24.64"/>
    </reaction>
</comment>
<comment type="cofactor">
    <cofactor evidence="2">
        <name>Zn(2+)</name>
        <dbReference type="ChEBI" id="CHEBI:29105"/>
    </cofactor>
    <text evidence="2">Binds 1 zinc ion per subunit.</text>
</comment>
<comment type="activity regulation">
    <text evidence="2">Binding to PMPCA is required for catalytic activity.</text>
</comment>
<comment type="subunit">
    <text evidence="2">Heterodimer of PMPCA (alpha) and PMPCB (beta) subunits, forming the mitochondrial processing protease (MPP) in which PMPCA is involved in substrate recognition and binding and PMPCB is the catalytic subunit.</text>
</comment>
<comment type="subcellular location">
    <subcellularLocation>
        <location evidence="1">Mitochondrion matrix</location>
    </subcellularLocation>
</comment>
<comment type="similarity">
    <text evidence="6">Belongs to the peptidase M16 family.</text>
</comment>
<dbReference type="EC" id="3.4.24.64" evidence="4 7"/>
<dbReference type="EMBL" id="L12965">
    <property type="protein sequence ID" value="AAA41633.1"/>
    <property type="molecule type" value="mRNA"/>
</dbReference>
<dbReference type="EMBL" id="BC078826">
    <property type="protein sequence ID" value="AAH78826.1"/>
    <property type="molecule type" value="mRNA"/>
</dbReference>
<dbReference type="EMBL" id="D13907">
    <property type="protein sequence ID" value="BAA03007.1"/>
    <property type="molecule type" value="mRNA"/>
</dbReference>
<dbReference type="PIR" id="S36390">
    <property type="entry name" value="S36390"/>
</dbReference>
<dbReference type="RefSeq" id="NP_071790.1">
    <property type="nucleotide sequence ID" value="NM_022395.2"/>
</dbReference>
<dbReference type="SMR" id="Q03346"/>
<dbReference type="CORUM" id="Q03346"/>
<dbReference type="FunCoup" id="Q03346">
    <property type="interactions" value="3604"/>
</dbReference>
<dbReference type="STRING" id="10116.ENSRNOP00000017017"/>
<dbReference type="MEROPS" id="M16.973"/>
<dbReference type="MEROPS" id="M16.981"/>
<dbReference type="iPTMnet" id="Q03346"/>
<dbReference type="PhosphoSitePlus" id="Q03346"/>
<dbReference type="jPOST" id="Q03346"/>
<dbReference type="PaxDb" id="10116-ENSRNOP00000017017"/>
<dbReference type="GeneID" id="64198"/>
<dbReference type="KEGG" id="rno:64198"/>
<dbReference type="AGR" id="RGD:621297"/>
<dbReference type="CTD" id="9512"/>
<dbReference type="RGD" id="621297">
    <property type="gene designation" value="Pmpcb"/>
</dbReference>
<dbReference type="VEuPathDB" id="HostDB:ENSRNOG00000012693"/>
<dbReference type="eggNOG" id="KOG0960">
    <property type="taxonomic scope" value="Eukaryota"/>
</dbReference>
<dbReference type="HOGENOM" id="CLU_009902_4_0_1"/>
<dbReference type="InParanoid" id="Q03346"/>
<dbReference type="OrthoDB" id="17429at9989"/>
<dbReference type="PhylomeDB" id="Q03346"/>
<dbReference type="TreeFam" id="TF105032"/>
<dbReference type="Reactome" id="R-RNO-8949664">
    <property type="pathway name" value="Processing of SMDT1"/>
</dbReference>
<dbReference type="CD-CODE" id="246D7041">
    <property type="entry name" value="Chromatoid body"/>
</dbReference>
<dbReference type="PRO" id="PR:Q03346"/>
<dbReference type="Proteomes" id="UP000002494">
    <property type="component" value="Chromosome 4"/>
</dbReference>
<dbReference type="Bgee" id="ENSRNOG00000012693">
    <property type="expression patterns" value="Expressed in heart and 20 other cell types or tissues"/>
</dbReference>
<dbReference type="GO" id="GO:0017087">
    <property type="term" value="C:mitochondrial processing peptidase complex"/>
    <property type="evidence" value="ECO:0000314"/>
    <property type="project" value="UniProtKB"/>
</dbReference>
<dbReference type="GO" id="GO:0005739">
    <property type="term" value="C:mitochondrion"/>
    <property type="evidence" value="ECO:0000318"/>
    <property type="project" value="GO_Central"/>
</dbReference>
<dbReference type="GO" id="GO:0004175">
    <property type="term" value="F:endopeptidase activity"/>
    <property type="evidence" value="ECO:0000314"/>
    <property type="project" value="RGD"/>
</dbReference>
<dbReference type="GO" id="GO:0046872">
    <property type="term" value="F:metal ion binding"/>
    <property type="evidence" value="ECO:0007669"/>
    <property type="project" value="UniProtKB-KW"/>
</dbReference>
<dbReference type="GO" id="GO:0004222">
    <property type="term" value="F:metalloendopeptidase activity"/>
    <property type="evidence" value="ECO:0000314"/>
    <property type="project" value="UniProtKB"/>
</dbReference>
<dbReference type="GO" id="GO:0016485">
    <property type="term" value="P:protein processing"/>
    <property type="evidence" value="ECO:0000314"/>
    <property type="project" value="UniProtKB"/>
</dbReference>
<dbReference type="GO" id="GO:0006627">
    <property type="term" value="P:protein processing involved in protein targeting to mitochondrion"/>
    <property type="evidence" value="ECO:0000314"/>
    <property type="project" value="UniProtKB"/>
</dbReference>
<dbReference type="FunFam" id="3.30.830.10:FF:000002">
    <property type="entry name" value="Mitochondrial-processing peptidase subunit beta"/>
    <property type="match status" value="1"/>
</dbReference>
<dbReference type="FunFam" id="3.30.830.10:FF:000001">
    <property type="entry name" value="Mitochondrial-processing peptidase subunit beta, mitochondrial"/>
    <property type="match status" value="1"/>
</dbReference>
<dbReference type="Gene3D" id="3.30.830.10">
    <property type="entry name" value="Metalloenzyme, LuxS/M16 peptidase-like"/>
    <property type="match status" value="2"/>
</dbReference>
<dbReference type="InterPro" id="IPR011249">
    <property type="entry name" value="Metalloenz_LuxS/M16"/>
</dbReference>
<dbReference type="InterPro" id="IPR050361">
    <property type="entry name" value="MPP/UQCRC_Complex"/>
</dbReference>
<dbReference type="InterPro" id="IPR011765">
    <property type="entry name" value="Pept_M16_N"/>
</dbReference>
<dbReference type="InterPro" id="IPR001431">
    <property type="entry name" value="Pept_M16_Zn_BS"/>
</dbReference>
<dbReference type="InterPro" id="IPR007863">
    <property type="entry name" value="Peptidase_M16_C"/>
</dbReference>
<dbReference type="PANTHER" id="PTHR11851">
    <property type="entry name" value="METALLOPROTEASE"/>
    <property type="match status" value="1"/>
</dbReference>
<dbReference type="PANTHER" id="PTHR11851:SF103">
    <property type="entry name" value="MITOCHONDRIAL-PROCESSING PEPTIDASE SUBUNIT BETA"/>
    <property type="match status" value="1"/>
</dbReference>
<dbReference type="Pfam" id="PF00675">
    <property type="entry name" value="Peptidase_M16"/>
    <property type="match status" value="1"/>
</dbReference>
<dbReference type="Pfam" id="PF05193">
    <property type="entry name" value="Peptidase_M16_C"/>
    <property type="match status" value="1"/>
</dbReference>
<dbReference type="SUPFAM" id="SSF63411">
    <property type="entry name" value="LuxS/MPP-like metallohydrolase"/>
    <property type="match status" value="2"/>
</dbReference>
<dbReference type="PROSITE" id="PS00143">
    <property type="entry name" value="INSULINASE"/>
    <property type="match status" value="1"/>
</dbReference>
<name>MPPB_RAT</name>
<sequence length="489" mass="54265">MAAAAVSRTLLPVAGRRLWGFTRRLPLRAAAAQPLYFGGDRLRSTQAAPQVVLNVPETQVTCLENGLRVASENSGISTCTVGLWIDAGSRYENEKNNGTAHFLEHMAFKGTKKRSQLDLELEIENMGAHLNAYTSREQTVYYAKAFSKDLPRAVEILADIIQNSTLGEAEIERERGVILREMQEVETNLQEVVFDYLHATAYQNTALGRTILGPTENIKSISRKDLVDYITTHYKGPRIVLAAAGGVCHNELLELAKFHFGDSLCAHKGDVPALPPCKFTGSEIRVRDDKMPLAHLAVAIEAVGWTHPDTICLMVANTLIGNWDRSFGGGMNLSSKLAQLTCHGNLCHSFQSFNTSYTDTGLWGLYMVCEQATVADMLHAVQKEWMRLCTAVSESEVARAKNLLKTNMLLQLDGSTPICEDIGRQMLCYNRRIPIPELEARIDAVDAEMVREVCTKYIYGKSPAIAALGPIERLPDFNQICSNMRWTRD</sequence>
<organism>
    <name type="scientific">Rattus norvegicus</name>
    <name type="common">Rat</name>
    <dbReference type="NCBI Taxonomy" id="10116"/>
    <lineage>
        <taxon>Eukaryota</taxon>
        <taxon>Metazoa</taxon>
        <taxon>Chordata</taxon>
        <taxon>Craniata</taxon>
        <taxon>Vertebrata</taxon>
        <taxon>Euteleostomi</taxon>
        <taxon>Mammalia</taxon>
        <taxon>Eutheria</taxon>
        <taxon>Euarchontoglires</taxon>
        <taxon>Glires</taxon>
        <taxon>Rodentia</taxon>
        <taxon>Myomorpha</taxon>
        <taxon>Muroidea</taxon>
        <taxon>Muridae</taxon>
        <taxon>Murinae</taxon>
        <taxon>Rattus</taxon>
    </lineage>
</organism>
<reference key="1">
    <citation type="journal article" date="1993" name="Proc. Natl. Acad. Sci. U.S.A.">
        <title>The beta subunit of the mitochondrial processing peptidase from rat liver: cloning and sequencing of a cDNA and comparison with a proposed family of metallopeptidases.</title>
        <authorList>
            <person name="Paces V."/>
            <person name="Rosenberg L.E."/>
            <person name="Fenton W.A."/>
            <person name="Kalousek F."/>
        </authorList>
    </citation>
    <scope>NUCLEOTIDE SEQUENCE [MRNA]</scope>
    <source>
        <strain>Sprague-Dawley</strain>
        <tissue>Liver</tissue>
    </source>
</reference>
<reference key="2">
    <citation type="journal article" date="2004" name="Genome Res.">
        <title>The status, quality, and expansion of the NIH full-length cDNA project: the Mammalian Gene Collection (MGC).</title>
        <authorList>
            <consortium name="The MGC Project Team"/>
        </authorList>
    </citation>
    <scope>NUCLEOTIDE SEQUENCE [LARGE SCALE MRNA]</scope>
    <source>
        <tissue>Testis</tissue>
    </source>
</reference>
<reference key="3">
    <citation type="journal article" date="1993" name="Biochem. Biophys. Res. Commun.">
        <title>Molecular cloning of the smaller subunit(P52) of rat liver mitochondrial processing protease.</title>
        <authorList>
            <person name="Kitada S."/>
            <person name="Niidome T."/>
            <person name="Nagano T."/>
            <person name="Ogishima T."/>
            <person name="Ito A."/>
        </authorList>
    </citation>
    <scope>NUCLEOTIDE SEQUENCE [MRNA] OF 3-489</scope>
    <source>
        <tissue>Liver</tissue>
    </source>
</reference>
<reference key="4">
    <citation type="submission" date="1993-09" db="EMBL/GenBank/DDBJ databases">
        <authorList>
            <person name="Kitada S."/>
        </authorList>
    </citation>
    <scope>SEQUENCE REVISION</scope>
</reference>
<reference key="5">
    <citation type="submission" date="2006-11" db="UniProtKB">
        <authorList>
            <person name="Lubec G."/>
            <person name="Afjehi-Sadat L."/>
        </authorList>
    </citation>
    <scope>PROTEIN SEQUENCE OF 153-173</scope>
    <scope>IDENTIFICATION BY MASS SPECTROMETRY</scope>
    <source>
        <strain>Sprague-Dawley</strain>
        <tissue>Spinal cord</tissue>
    </source>
</reference>
<reference key="6">
    <citation type="journal article" date="2003" name="J. Biol. Chem.">
        <title>Determination of the cleavage site of the presequence by mitochondrial processing peptidase on the substrate binding scaffold and the multiple subsites inside a molecular cavity.</title>
        <authorList>
            <person name="Kitada S."/>
            <person name="Yamasaki E."/>
            <person name="Kojima K."/>
            <person name="Ito A."/>
        </authorList>
    </citation>
    <scope>FUNCTION</scope>
    <scope>CATALYTIC ACTIVITY</scope>
    <scope>MUTAGENESIS OF GLU-191 AND ASP-195</scope>
</reference>
<reference key="7">
    <citation type="journal article" date="2012" name="EMBO Rep.">
        <title>Mitochondrial processing peptidase regulates PINK1 processing, import and Parkin recruitment.</title>
        <authorList>
            <person name="Greene A.W."/>
            <person name="Grenier K."/>
            <person name="Aguileta M.A."/>
            <person name="Muise S."/>
            <person name="Farazifard R."/>
            <person name="Haque M.E."/>
            <person name="McBride H.M."/>
            <person name="Park D.S."/>
            <person name="Fon E.A."/>
        </authorList>
    </citation>
    <scope>FUNCTION</scope>
    <scope>CATALYTIC ACTIVITY</scope>
</reference>
<feature type="transit peptide" description="Mitochondrion" evidence="1">
    <location>
        <begin position="1"/>
        <end position="45"/>
    </location>
</feature>
<feature type="chain" id="PRO_0000026779" description="Mitochondrial-processing peptidase subunit beta">
    <location>
        <begin position="46"/>
        <end position="489"/>
    </location>
</feature>
<feature type="active site" description="Proton acceptor" evidence="3">
    <location>
        <position position="104"/>
    </location>
</feature>
<feature type="binding site" evidence="3">
    <location>
        <position position="101"/>
    </location>
    <ligand>
        <name>Zn(2+)</name>
        <dbReference type="ChEBI" id="CHEBI:29105"/>
    </ligand>
</feature>
<feature type="binding site" evidence="3">
    <location>
        <position position="105"/>
    </location>
    <ligand>
        <name>Zn(2+)</name>
        <dbReference type="ChEBI" id="CHEBI:29105"/>
    </ligand>
</feature>
<feature type="binding site" evidence="3">
    <location>
        <position position="181"/>
    </location>
    <ligand>
        <name>Zn(2+)</name>
        <dbReference type="ChEBI" id="CHEBI:29105"/>
    </ligand>
</feature>
<feature type="site" description="Required for the specific determination of the substrate cleavage site" evidence="4">
    <location>
        <position position="191"/>
    </location>
</feature>
<feature type="site" description="Required for the specific determination of the substrate cleavage site" evidence="4">
    <location>
        <position position="195"/>
    </location>
</feature>
<feature type="mutagenesis site" description="Loss of substrate cleavage site specificity. Complete loss of cleavage site specificity following an arginine at position P2; when associated with A-195." evidence="4">
    <original>E</original>
    <variation>A</variation>
    <location>
        <position position="191"/>
    </location>
</feature>
<feature type="mutagenesis site" description="Severe loss of cleavage site specificity following an arginine at position P2. The loss is complete; when associated with A-191." evidence="4">
    <original>D</original>
    <variation>A</variation>
    <location>
        <position position="195"/>
    </location>
</feature>
<feature type="sequence conflict" description="In Ref. 3; BAA03007." evidence="6" ref="3">
    <original>G</original>
    <variation>R</variation>
    <location>
        <position position="167"/>
    </location>
</feature>
<feature type="sequence conflict" description="In Ref. 1; AAA41633." evidence="6" ref="1">
    <original>C</original>
    <variation>R</variation>
    <location>
        <position position="312"/>
    </location>
</feature>
<proteinExistence type="evidence at protein level"/>
<protein>
    <recommendedName>
        <fullName>Mitochondrial-processing peptidase subunit beta</fullName>
        <ecNumber evidence="4 7">3.4.24.64</ecNumber>
    </recommendedName>
    <alternativeName>
        <fullName>Beta-MPP</fullName>
    </alternativeName>
    <alternativeName>
        <fullName>P-52</fullName>
    </alternativeName>
</protein>
<accession>Q03346</accession>
<accession>Q68G08</accession>
<evidence type="ECO:0000250" key="1">
    <source>
        <dbReference type="UniProtKB" id="O75439"/>
    </source>
</evidence>
<evidence type="ECO:0000250" key="2">
    <source>
        <dbReference type="UniProtKB" id="P10507"/>
    </source>
</evidence>
<evidence type="ECO:0000255" key="3">
    <source>
        <dbReference type="PROSITE-ProRule" id="PRU10096"/>
    </source>
</evidence>
<evidence type="ECO:0000269" key="4">
    <source>
    </source>
</evidence>
<evidence type="ECO:0000269" key="5">
    <source>
    </source>
</evidence>
<evidence type="ECO:0000305" key="6"/>
<evidence type="ECO:0000305" key="7">
    <source>
    </source>
</evidence>
<keyword id="KW-0903">Direct protein sequencing</keyword>
<keyword id="KW-0378">Hydrolase</keyword>
<keyword id="KW-0479">Metal-binding</keyword>
<keyword id="KW-0482">Metalloprotease</keyword>
<keyword id="KW-0496">Mitochondrion</keyword>
<keyword id="KW-0645">Protease</keyword>
<keyword id="KW-1185">Reference proteome</keyword>
<keyword id="KW-0809">Transit peptide</keyword>
<keyword id="KW-0862">Zinc</keyword>